<reference key="1">
    <citation type="journal article" date="2002" name="Nature">
        <title>Sequence and analysis of rice chromosome 4.</title>
        <authorList>
            <person name="Feng Q."/>
            <person name="Zhang Y."/>
            <person name="Hao P."/>
            <person name="Wang S."/>
            <person name="Fu G."/>
            <person name="Huang Y."/>
            <person name="Li Y."/>
            <person name="Zhu J."/>
            <person name="Liu Y."/>
            <person name="Hu X."/>
            <person name="Jia P."/>
            <person name="Zhang Y."/>
            <person name="Zhao Q."/>
            <person name="Ying K."/>
            <person name="Yu S."/>
            <person name="Tang Y."/>
            <person name="Weng Q."/>
            <person name="Zhang L."/>
            <person name="Lu Y."/>
            <person name="Mu J."/>
            <person name="Lu Y."/>
            <person name="Zhang L.S."/>
            <person name="Yu Z."/>
            <person name="Fan D."/>
            <person name="Liu X."/>
            <person name="Lu T."/>
            <person name="Li C."/>
            <person name="Wu Y."/>
            <person name="Sun T."/>
            <person name="Lei H."/>
            <person name="Li T."/>
            <person name="Hu H."/>
            <person name="Guan J."/>
            <person name="Wu M."/>
            <person name="Zhang R."/>
            <person name="Zhou B."/>
            <person name="Chen Z."/>
            <person name="Chen L."/>
            <person name="Jin Z."/>
            <person name="Wang R."/>
            <person name="Yin H."/>
            <person name="Cai Z."/>
            <person name="Ren S."/>
            <person name="Lv G."/>
            <person name="Gu W."/>
            <person name="Zhu G."/>
            <person name="Tu Y."/>
            <person name="Jia J."/>
            <person name="Zhang Y."/>
            <person name="Chen J."/>
            <person name="Kang H."/>
            <person name="Chen X."/>
            <person name="Shao C."/>
            <person name="Sun Y."/>
            <person name="Hu Q."/>
            <person name="Zhang X."/>
            <person name="Zhang W."/>
            <person name="Wang L."/>
            <person name="Ding C."/>
            <person name="Sheng H."/>
            <person name="Gu J."/>
            <person name="Chen S."/>
            <person name="Ni L."/>
            <person name="Zhu F."/>
            <person name="Chen W."/>
            <person name="Lan L."/>
            <person name="Lai Y."/>
            <person name="Cheng Z."/>
            <person name="Gu M."/>
            <person name="Jiang J."/>
            <person name="Li J."/>
            <person name="Hong G."/>
            <person name="Xue Y."/>
            <person name="Han B."/>
        </authorList>
    </citation>
    <scope>NUCLEOTIDE SEQUENCE [LARGE SCALE GENOMIC DNA]</scope>
    <source>
        <strain>cv. Nipponbare</strain>
    </source>
</reference>
<reference key="2">
    <citation type="journal article" date="2005" name="Nature">
        <title>The map-based sequence of the rice genome.</title>
        <authorList>
            <consortium name="International rice genome sequencing project (IRGSP)"/>
        </authorList>
    </citation>
    <scope>NUCLEOTIDE SEQUENCE [LARGE SCALE GENOMIC DNA]</scope>
    <source>
        <strain>cv. Nipponbare</strain>
    </source>
</reference>
<reference key="3">
    <citation type="journal article" date="2008" name="Nucleic Acids Res.">
        <title>The rice annotation project database (RAP-DB): 2008 update.</title>
        <authorList>
            <consortium name="The rice annotation project (RAP)"/>
        </authorList>
    </citation>
    <scope>GENOME REANNOTATION</scope>
    <source>
        <strain>cv. Nipponbare</strain>
    </source>
</reference>
<reference key="4">
    <citation type="journal article" date="2013" name="Rice">
        <title>Improvement of the Oryza sativa Nipponbare reference genome using next generation sequence and optical map data.</title>
        <authorList>
            <person name="Kawahara Y."/>
            <person name="de la Bastide M."/>
            <person name="Hamilton J.P."/>
            <person name="Kanamori H."/>
            <person name="McCombie W.R."/>
            <person name="Ouyang S."/>
            <person name="Schwartz D.C."/>
            <person name="Tanaka T."/>
            <person name="Wu J."/>
            <person name="Zhou S."/>
            <person name="Childs K.L."/>
            <person name="Davidson R.M."/>
            <person name="Lin H."/>
            <person name="Quesada-Ocampo L."/>
            <person name="Vaillancourt B."/>
            <person name="Sakai H."/>
            <person name="Lee S.S."/>
            <person name="Kim J."/>
            <person name="Numa H."/>
            <person name="Itoh T."/>
            <person name="Buell C.R."/>
            <person name="Matsumoto T."/>
        </authorList>
    </citation>
    <scope>GENOME REANNOTATION</scope>
    <source>
        <strain>cv. Nipponbare</strain>
    </source>
</reference>
<reference key="5">
    <citation type="journal article" date="2003" name="Science">
        <title>Collection, mapping, and annotation of over 28,000 cDNA clones from japonica rice.</title>
        <authorList>
            <consortium name="The rice full-length cDNA consortium"/>
        </authorList>
    </citation>
    <scope>NUCLEOTIDE SEQUENCE [LARGE SCALE MRNA]</scope>
    <source>
        <strain>cv. Nipponbare</strain>
    </source>
</reference>
<reference key="6">
    <citation type="journal article" date="2006" name="BMC Plant Biol.">
        <title>Analysis of rice glycosyl hydrolase family 1 and expression of Os4bglu12 beta-glucosidase.</title>
        <authorList>
            <person name="Opassiri R."/>
            <person name="Pomthong B."/>
            <person name="Onkoksoong T."/>
            <person name="Akiyama T."/>
            <person name="Esen A."/>
            <person name="Ketudat Cairns J.R."/>
        </authorList>
    </citation>
    <scope>GENE FAMILY</scope>
    <scope>NOMENCLATURE</scope>
</reference>
<reference key="7">
    <citation type="journal article" date="2014" name="Plant Sci.">
        <title>Expression and enzymatic properties of rice (Oryza sativa L.) monolignol beta-glucosidases.</title>
        <authorList>
            <person name="Baiya S."/>
            <person name="Hua Y."/>
            <person name="Ekkhara W."/>
            <person name="Ketudat Cairns J.R."/>
        </authorList>
    </citation>
    <scope>TISSUE SPECIFICITY</scope>
</reference>
<sequence length="516" mass="58823">MAAAWLVVLLTVHRLLHLSGVSAVDRSQFPPDFLFGTSSSAYQVEGGYLEGNKGLSNWDVFTHKQGTIEDGSNGDTANDHYHRYMEDIELMHSLGVNSYRFSISWARILPKGRFGDVNPDGVAFYNALIDGLVQKGIQPFVTICHYDIPHELDERYGGWLSPEIQKDFSYFAEVCFKLFGDRIKFWTTFNQPNLSIKFSYMDGFYSPGRCSEPFGKCALGNSSIEPYVAGHNIILSHANAVSVYRNKYQGKQGGQIGIALSITWYEPFRNTTIDLLAVKRALSFGASWFLDPILLGDYPTEMREVLGQSLPKFTSKQKNRLQSTKLDFIGLNHYTTCYVKDCIFSPCEIDPVNADARVFSLYERDGVPIGKATGAPFFHDVPRGMEEAVTYYKQRYNNTPTYITENGYSQASNSNMTAKDFTNDTGRITYIQGYLISLASAIRKGADVRGYFVWSLLDDFEWNFGYTLRFGLYHVHYKTLKRTPKLSVDWYRKFLTGSLLRRKFRDESQLHKFNSY</sequence>
<organism>
    <name type="scientific">Oryza sativa subsp. japonica</name>
    <name type="common">Rice</name>
    <dbReference type="NCBI Taxonomy" id="39947"/>
    <lineage>
        <taxon>Eukaryota</taxon>
        <taxon>Viridiplantae</taxon>
        <taxon>Streptophyta</taxon>
        <taxon>Embryophyta</taxon>
        <taxon>Tracheophyta</taxon>
        <taxon>Spermatophyta</taxon>
        <taxon>Magnoliopsida</taxon>
        <taxon>Liliopsida</taxon>
        <taxon>Poales</taxon>
        <taxon>Poaceae</taxon>
        <taxon>BOP clade</taxon>
        <taxon>Oryzoideae</taxon>
        <taxon>Oryzeae</taxon>
        <taxon>Oryzinae</taxon>
        <taxon>Oryza</taxon>
        <taxon>Oryza sativa</taxon>
    </lineage>
</organism>
<name>BGL14_ORYSJ</name>
<keyword id="KW-1015">Disulfide bond</keyword>
<keyword id="KW-0325">Glycoprotein</keyword>
<keyword id="KW-0378">Hydrolase</keyword>
<keyword id="KW-1185">Reference proteome</keyword>
<keyword id="KW-0732">Signal</keyword>
<dbReference type="EMBL" id="AL606622">
    <property type="protein sequence ID" value="CAE03397.2"/>
    <property type="molecule type" value="Genomic_DNA"/>
</dbReference>
<dbReference type="EMBL" id="AP008210">
    <property type="protein sequence ID" value="BAF15216.1"/>
    <property type="molecule type" value="Genomic_DNA"/>
</dbReference>
<dbReference type="EMBL" id="AP014960">
    <property type="protein sequence ID" value="BAS90056.1"/>
    <property type="molecule type" value="Genomic_DNA"/>
</dbReference>
<dbReference type="EMBL" id="AK067841">
    <property type="protein sequence ID" value="BAG90635.1"/>
    <property type="molecule type" value="mRNA"/>
</dbReference>
<dbReference type="RefSeq" id="XP_015634345.1">
    <property type="nucleotide sequence ID" value="XM_015778859.1"/>
</dbReference>
<dbReference type="SMR" id="Q7XPY7"/>
<dbReference type="FunCoup" id="Q7XPY7">
    <property type="interactions" value="394"/>
</dbReference>
<dbReference type="STRING" id="39947.Q7XPY7"/>
<dbReference type="CAZy" id="GH1">
    <property type="family name" value="Glycoside Hydrolase Family 1"/>
</dbReference>
<dbReference type="GlyCosmos" id="Q7XPY7">
    <property type="glycosylation" value="5 sites, No reported glycans"/>
</dbReference>
<dbReference type="PaxDb" id="39947-Q7XPY7"/>
<dbReference type="EnsemblPlants" id="Os04t0513100-01">
    <property type="protein sequence ID" value="Os04t0513100-01"/>
    <property type="gene ID" value="Os04g0513100"/>
</dbReference>
<dbReference type="Gramene" id="Os04t0513100-01">
    <property type="protein sequence ID" value="Os04t0513100-01"/>
    <property type="gene ID" value="Os04g0513100"/>
</dbReference>
<dbReference type="KEGG" id="dosa:Os04g0513100"/>
<dbReference type="eggNOG" id="KOG0626">
    <property type="taxonomic scope" value="Eukaryota"/>
</dbReference>
<dbReference type="HOGENOM" id="CLU_001859_1_0_1"/>
<dbReference type="InParanoid" id="Q7XPY7"/>
<dbReference type="OMA" id="MASGLVW"/>
<dbReference type="OrthoDB" id="65569at2759"/>
<dbReference type="BRENDA" id="3.2.1.126">
    <property type="organism ID" value="8948"/>
</dbReference>
<dbReference type="Proteomes" id="UP000000763">
    <property type="component" value="Chromosome 4"/>
</dbReference>
<dbReference type="Proteomes" id="UP000059680">
    <property type="component" value="Chromosome 4"/>
</dbReference>
<dbReference type="GO" id="GO:0033907">
    <property type="term" value="F:beta-D-fucosidase activity"/>
    <property type="evidence" value="ECO:0007669"/>
    <property type="project" value="UniProtKB-ARBA"/>
</dbReference>
<dbReference type="GO" id="GO:0004565">
    <property type="term" value="F:beta-galactosidase activity"/>
    <property type="evidence" value="ECO:0007669"/>
    <property type="project" value="UniProtKB-ARBA"/>
</dbReference>
<dbReference type="GO" id="GO:0008422">
    <property type="term" value="F:beta-glucosidase activity"/>
    <property type="evidence" value="ECO:0000318"/>
    <property type="project" value="GO_Central"/>
</dbReference>
<dbReference type="GO" id="GO:0005975">
    <property type="term" value="P:carbohydrate metabolic process"/>
    <property type="evidence" value="ECO:0007669"/>
    <property type="project" value="InterPro"/>
</dbReference>
<dbReference type="FunFam" id="3.20.20.80:FF:000020">
    <property type="entry name" value="Beta-glucosidase 12"/>
    <property type="match status" value="1"/>
</dbReference>
<dbReference type="Gene3D" id="3.20.20.80">
    <property type="entry name" value="Glycosidases"/>
    <property type="match status" value="1"/>
</dbReference>
<dbReference type="InterPro" id="IPR001360">
    <property type="entry name" value="Glyco_hydro_1"/>
</dbReference>
<dbReference type="InterPro" id="IPR033132">
    <property type="entry name" value="Glyco_hydro_1_N_CS"/>
</dbReference>
<dbReference type="InterPro" id="IPR017853">
    <property type="entry name" value="Glycoside_hydrolase_SF"/>
</dbReference>
<dbReference type="PANTHER" id="PTHR10353">
    <property type="entry name" value="GLYCOSYL HYDROLASE"/>
    <property type="match status" value="1"/>
</dbReference>
<dbReference type="PANTHER" id="PTHR10353:SF191">
    <property type="entry name" value="INACTIVE BETA-GLUCOSIDASE 14-RELATED"/>
    <property type="match status" value="1"/>
</dbReference>
<dbReference type="Pfam" id="PF00232">
    <property type="entry name" value="Glyco_hydro_1"/>
    <property type="match status" value="1"/>
</dbReference>
<dbReference type="PRINTS" id="PR00131">
    <property type="entry name" value="GLHYDRLASE1"/>
</dbReference>
<dbReference type="SUPFAM" id="SSF51445">
    <property type="entry name" value="(Trans)glycosidases"/>
    <property type="match status" value="1"/>
</dbReference>
<dbReference type="PROSITE" id="PS00653">
    <property type="entry name" value="GLYCOSYL_HYDROL_F1_2"/>
    <property type="match status" value="1"/>
</dbReference>
<proteinExistence type="evidence at transcript level"/>
<feature type="signal peptide" evidence="5">
    <location>
        <begin position="1"/>
        <end position="23"/>
    </location>
</feature>
<feature type="chain" id="PRO_0000390331" description="Probable inactive beta-glucosidase 14">
    <location>
        <begin position="24"/>
        <end position="516"/>
    </location>
</feature>
<feature type="active site" description="Nucleophile" evidence="2">
    <location>
        <position position="405"/>
    </location>
</feature>
<feature type="binding site" evidence="2">
    <location>
        <position position="43"/>
    </location>
    <ligand>
        <name>a beta-D-glucoside</name>
        <dbReference type="ChEBI" id="CHEBI:22798"/>
    </ligand>
</feature>
<feature type="binding site" evidence="2">
    <location>
        <position position="145"/>
    </location>
    <ligand>
        <name>a beta-D-glucoside</name>
        <dbReference type="ChEBI" id="CHEBI:22798"/>
    </ligand>
</feature>
<feature type="binding site" evidence="3">
    <location>
        <begin position="190"/>
        <end position="191"/>
    </location>
    <ligand>
        <name>a beta-D-glucoside</name>
        <dbReference type="ChEBI" id="CHEBI:22798"/>
    </ligand>
</feature>
<feature type="binding site" evidence="2">
    <location>
        <position position="334"/>
    </location>
    <ligand>
        <name>a beta-D-glucoside</name>
        <dbReference type="ChEBI" id="CHEBI:22798"/>
    </ligand>
</feature>
<feature type="binding site" evidence="4">
    <location>
        <position position="405"/>
    </location>
    <ligand>
        <name>a beta-D-glucoside</name>
        <dbReference type="ChEBI" id="CHEBI:22798"/>
    </ligand>
</feature>
<feature type="binding site" evidence="2">
    <location>
        <position position="454"/>
    </location>
    <ligand>
        <name>a beta-D-glucoside</name>
        <dbReference type="ChEBI" id="CHEBI:22798"/>
    </ligand>
</feature>
<feature type="binding site" evidence="2">
    <location>
        <begin position="461"/>
        <end position="462"/>
    </location>
    <ligand>
        <name>a beta-D-glucoside</name>
        <dbReference type="ChEBI" id="CHEBI:22798"/>
    </ligand>
</feature>
<feature type="binding site" evidence="1">
    <location>
        <position position="470"/>
    </location>
    <ligand>
        <name>a beta-D-glucoside</name>
        <dbReference type="ChEBI" id="CHEBI:22798"/>
    </ligand>
</feature>
<feature type="glycosylation site" description="N-linked (GlcNAc...) asparagine" evidence="6">
    <location>
        <position position="193"/>
    </location>
</feature>
<feature type="glycosylation site" description="N-linked (GlcNAc...) asparagine" evidence="6">
    <location>
        <position position="221"/>
    </location>
</feature>
<feature type="glycosylation site" description="N-linked (GlcNAc...) asparagine" evidence="6">
    <location>
        <position position="270"/>
    </location>
</feature>
<feature type="glycosylation site" description="N-linked (GlcNAc...) asparagine" evidence="6">
    <location>
        <position position="415"/>
    </location>
</feature>
<feature type="glycosylation site" description="N-linked (GlcNAc...) asparagine" evidence="6">
    <location>
        <position position="423"/>
    </location>
</feature>
<feature type="disulfide bond" evidence="2">
    <location>
        <begin position="210"/>
        <end position="217"/>
    </location>
</feature>
<feature type="disulfide bond" evidence="2">
    <location>
        <begin position="342"/>
        <end position="347"/>
    </location>
</feature>
<evidence type="ECO:0000250" key="1">
    <source>
        <dbReference type="UniProtKB" id="Q1XH05"/>
    </source>
</evidence>
<evidence type="ECO:0000250" key="2">
    <source>
        <dbReference type="UniProtKB" id="Q7XSK0"/>
    </source>
</evidence>
<evidence type="ECO:0000250" key="3">
    <source>
        <dbReference type="UniProtKB" id="Q8GU20"/>
    </source>
</evidence>
<evidence type="ECO:0000250" key="4">
    <source>
        <dbReference type="UniProtKB" id="Q9SPP9"/>
    </source>
</evidence>
<evidence type="ECO:0000255" key="5"/>
<evidence type="ECO:0000255" key="6">
    <source>
        <dbReference type="PROSITE-ProRule" id="PRU00498"/>
    </source>
</evidence>
<evidence type="ECO:0000269" key="7">
    <source>
    </source>
</evidence>
<evidence type="ECO:0000303" key="8">
    <source>
    </source>
</evidence>
<evidence type="ECO:0000305" key="9"/>
<evidence type="ECO:0000312" key="10">
    <source>
        <dbReference type="EMBL" id="BAS90056.1"/>
    </source>
</evidence>
<evidence type="ECO:0000312" key="11">
    <source>
        <dbReference type="EMBL" id="CAE03397.2"/>
    </source>
</evidence>
<comment type="tissue specificity">
    <text evidence="7">Expressed in flowers and endosperm.</text>
</comment>
<comment type="similarity">
    <text evidence="9">Belongs to the glycosyl hydrolase 1 family.</text>
</comment>
<comment type="caution">
    <text evidence="9">Lacks the conserved Glu residue acting as catalytic proton donor. Its enzyme activity is therefore unsure.</text>
</comment>
<accession>Q7XPY7</accession>
<accession>A0A0P0WCL2</accession>
<gene>
    <name evidence="8" type="primary">BGLU14</name>
    <name evidence="10" type="ordered locus">Os04g0513100</name>
    <name evidence="9" type="ordered locus">LOC_Os04g43360</name>
    <name evidence="11" type="ORF">OSJNBa0004N05.21</name>
</gene>
<protein>
    <recommendedName>
        <fullName evidence="9">Probable inactive beta-glucosidase 14</fullName>
        <shortName evidence="8">Os4bglu14</shortName>
    </recommendedName>
</protein>